<reference key="1">
    <citation type="submission" date="2008-05" db="EMBL/GenBank/DDBJ databases">
        <title>Complete sequence of Chlorobium limicola DSM 245.</title>
        <authorList>
            <consortium name="US DOE Joint Genome Institute"/>
            <person name="Lucas S."/>
            <person name="Copeland A."/>
            <person name="Lapidus A."/>
            <person name="Glavina del Rio T."/>
            <person name="Dalin E."/>
            <person name="Tice H."/>
            <person name="Bruce D."/>
            <person name="Goodwin L."/>
            <person name="Pitluck S."/>
            <person name="Schmutz J."/>
            <person name="Larimer F."/>
            <person name="Land M."/>
            <person name="Hauser L."/>
            <person name="Kyrpides N."/>
            <person name="Ovchinnikova G."/>
            <person name="Zhao F."/>
            <person name="Li T."/>
            <person name="Liu Z."/>
            <person name="Overmann J."/>
            <person name="Bryant D.A."/>
            <person name="Richardson P."/>
        </authorList>
    </citation>
    <scope>NUCLEOTIDE SEQUENCE [LARGE SCALE GENOMIC DNA]</scope>
    <source>
        <strain>DSM 245 / NBRC 103803 / 6330</strain>
    </source>
</reference>
<sequence length="95" mass="10682">MSVTRDDVAYIAALSRLQFSDEEMATMTTELNSILHYVEKLNEIDTDGVEPLSGIHDQMNVLRDDVEKESIATALALQNAPDRQDRFFKVPKVIG</sequence>
<organism>
    <name type="scientific">Chlorobium limicola (strain DSM 245 / NBRC 103803 / 6330)</name>
    <dbReference type="NCBI Taxonomy" id="290315"/>
    <lineage>
        <taxon>Bacteria</taxon>
        <taxon>Pseudomonadati</taxon>
        <taxon>Chlorobiota</taxon>
        <taxon>Chlorobiia</taxon>
        <taxon>Chlorobiales</taxon>
        <taxon>Chlorobiaceae</taxon>
        <taxon>Chlorobium/Pelodictyon group</taxon>
        <taxon>Chlorobium</taxon>
    </lineage>
</organism>
<gene>
    <name evidence="1" type="primary">gatC</name>
    <name type="ordered locus">Clim_2041</name>
</gene>
<feature type="chain" id="PRO_1000095269" description="Aspartyl/glutamyl-tRNA(Asn/Gln) amidotransferase subunit C">
    <location>
        <begin position="1"/>
        <end position="95"/>
    </location>
</feature>
<keyword id="KW-0067">ATP-binding</keyword>
<keyword id="KW-0436">Ligase</keyword>
<keyword id="KW-0547">Nucleotide-binding</keyword>
<keyword id="KW-0648">Protein biosynthesis</keyword>
<comment type="function">
    <text evidence="1">Allows the formation of correctly charged Asn-tRNA(Asn) or Gln-tRNA(Gln) through the transamidation of misacylated Asp-tRNA(Asn) or Glu-tRNA(Gln) in organisms which lack either or both of asparaginyl-tRNA or glutaminyl-tRNA synthetases. The reaction takes place in the presence of glutamine and ATP through an activated phospho-Asp-tRNA(Asn) or phospho-Glu-tRNA(Gln).</text>
</comment>
<comment type="catalytic activity">
    <reaction evidence="1">
        <text>L-glutamyl-tRNA(Gln) + L-glutamine + ATP + H2O = L-glutaminyl-tRNA(Gln) + L-glutamate + ADP + phosphate + H(+)</text>
        <dbReference type="Rhea" id="RHEA:17521"/>
        <dbReference type="Rhea" id="RHEA-COMP:9681"/>
        <dbReference type="Rhea" id="RHEA-COMP:9684"/>
        <dbReference type="ChEBI" id="CHEBI:15377"/>
        <dbReference type="ChEBI" id="CHEBI:15378"/>
        <dbReference type="ChEBI" id="CHEBI:29985"/>
        <dbReference type="ChEBI" id="CHEBI:30616"/>
        <dbReference type="ChEBI" id="CHEBI:43474"/>
        <dbReference type="ChEBI" id="CHEBI:58359"/>
        <dbReference type="ChEBI" id="CHEBI:78520"/>
        <dbReference type="ChEBI" id="CHEBI:78521"/>
        <dbReference type="ChEBI" id="CHEBI:456216"/>
    </reaction>
</comment>
<comment type="catalytic activity">
    <reaction evidence="1">
        <text>L-aspartyl-tRNA(Asn) + L-glutamine + ATP + H2O = L-asparaginyl-tRNA(Asn) + L-glutamate + ADP + phosphate + 2 H(+)</text>
        <dbReference type="Rhea" id="RHEA:14513"/>
        <dbReference type="Rhea" id="RHEA-COMP:9674"/>
        <dbReference type="Rhea" id="RHEA-COMP:9677"/>
        <dbReference type="ChEBI" id="CHEBI:15377"/>
        <dbReference type="ChEBI" id="CHEBI:15378"/>
        <dbReference type="ChEBI" id="CHEBI:29985"/>
        <dbReference type="ChEBI" id="CHEBI:30616"/>
        <dbReference type="ChEBI" id="CHEBI:43474"/>
        <dbReference type="ChEBI" id="CHEBI:58359"/>
        <dbReference type="ChEBI" id="CHEBI:78515"/>
        <dbReference type="ChEBI" id="CHEBI:78516"/>
        <dbReference type="ChEBI" id="CHEBI:456216"/>
    </reaction>
</comment>
<comment type="subunit">
    <text evidence="1">Heterotrimer of A, B and C subunits.</text>
</comment>
<comment type="similarity">
    <text evidence="1">Belongs to the GatC family.</text>
</comment>
<proteinExistence type="inferred from homology"/>
<name>GATC_CHLL2</name>
<protein>
    <recommendedName>
        <fullName evidence="1">Aspartyl/glutamyl-tRNA(Asn/Gln) amidotransferase subunit C</fullName>
        <shortName evidence="1">Asp/Glu-ADT subunit C</shortName>
        <ecNumber evidence="1">6.3.5.-</ecNumber>
    </recommendedName>
</protein>
<dbReference type="EC" id="6.3.5.-" evidence="1"/>
<dbReference type="EMBL" id="CP001097">
    <property type="protein sequence ID" value="ACD91070.1"/>
    <property type="molecule type" value="Genomic_DNA"/>
</dbReference>
<dbReference type="RefSeq" id="WP_012466939.1">
    <property type="nucleotide sequence ID" value="NC_010803.1"/>
</dbReference>
<dbReference type="SMR" id="B3EG61"/>
<dbReference type="STRING" id="290315.Clim_2041"/>
<dbReference type="KEGG" id="cli:Clim_2041"/>
<dbReference type="eggNOG" id="COG0721">
    <property type="taxonomic scope" value="Bacteria"/>
</dbReference>
<dbReference type="HOGENOM" id="CLU_105899_6_1_10"/>
<dbReference type="OrthoDB" id="9813938at2"/>
<dbReference type="Proteomes" id="UP000008841">
    <property type="component" value="Chromosome"/>
</dbReference>
<dbReference type="GO" id="GO:0050566">
    <property type="term" value="F:asparaginyl-tRNA synthase (glutamine-hydrolyzing) activity"/>
    <property type="evidence" value="ECO:0007669"/>
    <property type="project" value="RHEA"/>
</dbReference>
<dbReference type="GO" id="GO:0005524">
    <property type="term" value="F:ATP binding"/>
    <property type="evidence" value="ECO:0007669"/>
    <property type="project" value="UniProtKB-KW"/>
</dbReference>
<dbReference type="GO" id="GO:0050567">
    <property type="term" value="F:glutaminyl-tRNA synthase (glutamine-hydrolyzing) activity"/>
    <property type="evidence" value="ECO:0007669"/>
    <property type="project" value="UniProtKB-UniRule"/>
</dbReference>
<dbReference type="GO" id="GO:0070681">
    <property type="term" value="P:glutaminyl-tRNAGln biosynthesis via transamidation"/>
    <property type="evidence" value="ECO:0007669"/>
    <property type="project" value="TreeGrafter"/>
</dbReference>
<dbReference type="GO" id="GO:0006450">
    <property type="term" value="P:regulation of translational fidelity"/>
    <property type="evidence" value="ECO:0007669"/>
    <property type="project" value="InterPro"/>
</dbReference>
<dbReference type="GO" id="GO:0006412">
    <property type="term" value="P:translation"/>
    <property type="evidence" value="ECO:0007669"/>
    <property type="project" value="UniProtKB-UniRule"/>
</dbReference>
<dbReference type="Gene3D" id="1.10.20.60">
    <property type="entry name" value="Glu-tRNAGln amidotransferase C subunit, N-terminal domain"/>
    <property type="match status" value="1"/>
</dbReference>
<dbReference type="HAMAP" id="MF_00122">
    <property type="entry name" value="GatC"/>
    <property type="match status" value="1"/>
</dbReference>
<dbReference type="InterPro" id="IPR036113">
    <property type="entry name" value="Asp/Glu-ADT_sf_sub_c"/>
</dbReference>
<dbReference type="InterPro" id="IPR003837">
    <property type="entry name" value="GatC"/>
</dbReference>
<dbReference type="NCBIfam" id="TIGR00135">
    <property type="entry name" value="gatC"/>
    <property type="match status" value="1"/>
</dbReference>
<dbReference type="PANTHER" id="PTHR15004">
    <property type="entry name" value="GLUTAMYL-TRNA(GLN) AMIDOTRANSFERASE SUBUNIT C, MITOCHONDRIAL"/>
    <property type="match status" value="1"/>
</dbReference>
<dbReference type="PANTHER" id="PTHR15004:SF0">
    <property type="entry name" value="GLUTAMYL-TRNA(GLN) AMIDOTRANSFERASE SUBUNIT C, MITOCHONDRIAL"/>
    <property type="match status" value="1"/>
</dbReference>
<dbReference type="Pfam" id="PF02686">
    <property type="entry name" value="GatC"/>
    <property type="match status" value="1"/>
</dbReference>
<dbReference type="SUPFAM" id="SSF141000">
    <property type="entry name" value="Glu-tRNAGln amidotransferase C subunit"/>
    <property type="match status" value="1"/>
</dbReference>
<evidence type="ECO:0000255" key="1">
    <source>
        <dbReference type="HAMAP-Rule" id="MF_00122"/>
    </source>
</evidence>
<accession>B3EG61</accession>